<evidence type="ECO:0000250" key="1"/>
<evidence type="ECO:0000255" key="2"/>
<evidence type="ECO:0000255" key="3">
    <source>
        <dbReference type="PROSITE-ProRule" id="PRU00175"/>
    </source>
</evidence>
<evidence type="ECO:0000256" key="4">
    <source>
        <dbReference type="SAM" id="MobiDB-lite"/>
    </source>
</evidence>
<evidence type="ECO:0000269" key="5">
    <source>
    </source>
</evidence>
<evidence type="ECO:0000305" key="6"/>
<proteinExistence type="evidence at transcript level"/>
<accession>Q9LF64</accession>
<accession>Q0WWZ5</accession>
<dbReference type="EC" id="2.3.2.27" evidence="6"/>
<dbReference type="EMBL" id="AL391151">
    <property type="protein sequence ID" value="CAC01904.1"/>
    <property type="molecule type" value="Genomic_DNA"/>
</dbReference>
<dbReference type="EMBL" id="CP002688">
    <property type="protein sequence ID" value="AED92447.1"/>
    <property type="molecule type" value="Genomic_DNA"/>
</dbReference>
<dbReference type="EMBL" id="AK226188">
    <property type="protein sequence ID" value="BAE98353.1"/>
    <property type="molecule type" value="mRNA"/>
</dbReference>
<dbReference type="PIR" id="T51464">
    <property type="entry name" value="T51464"/>
</dbReference>
<dbReference type="RefSeq" id="NP_197262.1">
    <property type="nucleotide sequence ID" value="NM_121766.4"/>
</dbReference>
<dbReference type="SMR" id="Q9LF64"/>
<dbReference type="BioGRID" id="16902">
    <property type="interactions" value="4"/>
</dbReference>
<dbReference type="FunCoup" id="Q9LF64">
    <property type="interactions" value="29"/>
</dbReference>
<dbReference type="IntAct" id="Q9LF64">
    <property type="interactions" value="3"/>
</dbReference>
<dbReference type="STRING" id="3702.Q9LF64"/>
<dbReference type="PaxDb" id="3702-AT5G17600.1"/>
<dbReference type="EnsemblPlants" id="AT5G17600.1">
    <property type="protein sequence ID" value="AT5G17600.1"/>
    <property type="gene ID" value="AT5G17600"/>
</dbReference>
<dbReference type="GeneID" id="831626"/>
<dbReference type="Gramene" id="AT5G17600.1">
    <property type="protein sequence ID" value="AT5G17600.1"/>
    <property type="gene ID" value="AT5G17600"/>
</dbReference>
<dbReference type="KEGG" id="ath:AT5G17600"/>
<dbReference type="Araport" id="AT5G17600"/>
<dbReference type="TAIR" id="AT5G17600">
    <property type="gene designation" value="ATL52"/>
</dbReference>
<dbReference type="eggNOG" id="KOG0800">
    <property type="taxonomic scope" value="Eukaryota"/>
</dbReference>
<dbReference type="HOGENOM" id="CLU_040108_0_1_1"/>
<dbReference type="InParanoid" id="Q9LF64"/>
<dbReference type="OMA" id="VIMSKCC"/>
<dbReference type="PhylomeDB" id="Q9LF64"/>
<dbReference type="UniPathway" id="UPA00143"/>
<dbReference type="PRO" id="PR:Q9LF64"/>
<dbReference type="Proteomes" id="UP000006548">
    <property type="component" value="Chromosome 5"/>
</dbReference>
<dbReference type="ExpressionAtlas" id="Q9LF64">
    <property type="expression patterns" value="baseline and differential"/>
</dbReference>
<dbReference type="GO" id="GO:0016020">
    <property type="term" value="C:membrane"/>
    <property type="evidence" value="ECO:0007669"/>
    <property type="project" value="UniProtKB-SubCell"/>
</dbReference>
<dbReference type="GO" id="GO:0016740">
    <property type="term" value="F:transferase activity"/>
    <property type="evidence" value="ECO:0007669"/>
    <property type="project" value="UniProtKB-KW"/>
</dbReference>
<dbReference type="GO" id="GO:0008270">
    <property type="term" value="F:zinc ion binding"/>
    <property type="evidence" value="ECO:0007669"/>
    <property type="project" value="UniProtKB-KW"/>
</dbReference>
<dbReference type="GO" id="GO:0016567">
    <property type="term" value="P:protein ubiquitination"/>
    <property type="evidence" value="ECO:0007669"/>
    <property type="project" value="UniProtKB-UniPathway"/>
</dbReference>
<dbReference type="CDD" id="cd16461">
    <property type="entry name" value="RING-H2_EL5-like"/>
    <property type="match status" value="1"/>
</dbReference>
<dbReference type="FunFam" id="3.30.40.10:FF:000233">
    <property type="entry name" value="RING-H2 finger protein ATL54"/>
    <property type="match status" value="1"/>
</dbReference>
<dbReference type="Gene3D" id="3.30.40.10">
    <property type="entry name" value="Zinc/RING finger domain, C3HC4 (zinc finger)"/>
    <property type="match status" value="1"/>
</dbReference>
<dbReference type="InterPro" id="IPR044600">
    <property type="entry name" value="ATL1/ATL16-like"/>
</dbReference>
<dbReference type="InterPro" id="IPR001841">
    <property type="entry name" value="Znf_RING"/>
</dbReference>
<dbReference type="InterPro" id="IPR013083">
    <property type="entry name" value="Znf_RING/FYVE/PHD"/>
</dbReference>
<dbReference type="PANTHER" id="PTHR46913">
    <property type="entry name" value="RING-H2 FINGER PROTEIN ATL16"/>
    <property type="match status" value="1"/>
</dbReference>
<dbReference type="PANTHER" id="PTHR46913:SF22">
    <property type="entry name" value="RING-TYPE E3 UBIQUITIN TRANSFERASE"/>
    <property type="match status" value="1"/>
</dbReference>
<dbReference type="Pfam" id="PF13639">
    <property type="entry name" value="zf-RING_2"/>
    <property type="match status" value="1"/>
</dbReference>
<dbReference type="SMART" id="SM00184">
    <property type="entry name" value="RING"/>
    <property type="match status" value="1"/>
</dbReference>
<dbReference type="SUPFAM" id="SSF57850">
    <property type="entry name" value="RING/U-box"/>
    <property type="match status" value="1"/>
</dbReference>
<dbReference type="PROSITE" id="PS50089">
    <property type="entry name" value="ZF_RING_2"/>
    <property type="match status" value="1"/>
</dbReference>
<comment type="catalytic activity">
    <reaction evidence="6">
        <text>S-ubiquitinyl-[E2 ubiquitin-conjugating enzyme]-L-cysteine + [acceptor protein]-L-lysine = [E2 ubiquitin-conjugating enzyme]-L-cysteine + N(6)-ubiquitinyl-[acceptor protein]-L-lysine.</text>
        <dbReference type="EC" id="2.3.2.27"/>
    </reaction>
</comment>
<comment type="pathway">
    <text>Protein modification; protein ubiquitination.</text>
</comment>
<comment type="subcellular location">
    <subcellularLocation>
        <location evidence="6">Membrane</location>
        <topology evidence="6">Single-pass membrane protein</topology>
    </subcellularLocation>
</comment>
<comment type="tissue specificity">
    <text evidence="5">Expressed in flowers.</text>
</comment>
<comment type="domain">
    <text evidence="1">The RING-type zinc finger domain mediates binding to an E2 ubiquitin-conjugating enzyme.</text>
</comment>
<comment type="similarity">
    <text evidence="6">Belongs to the RING-type zinc finger family. ATL subfamily.</text>
</comment>
<sequence>MSTNPNPWSPYDSYNDCSQGICNIYCPQWCYLIFPPPPPSFFLDDDSSSSSSSFSPLLIALIGILTSALILVSYYTLISKYCHRHHQTSSSETLNLNHNGEGFFSSTQRISTNGDGLNESMIKSITVYKYKSGDGFVDGSDCSVCLSEFEENESLRLLPKCNHAFHLPCIDTWLKSHSNCPLCRAFVTGVNNPTASVGQNVSVVVANQSNSAHQTGSVSEINLNLAGYESQTGDFDSVVVIEDLEIGSRNSDARSELQLPEERRETKDEDSLPIRRSVSLNSGVVVSIADVLREIEDEEGESGGVGTSQRREEGEDGDGKTIPPTEANQRSGGVSGFFVRSLSTGRFIFSRYDRGRNYRLPL</sequence>
<name>ATL52_ARATH</name>
<reference key="1">
    <citation type="journal article" date="2000" name="Nature">
        <title>Sequence and analysis of chromosome 5 of the plant Arabidopsis thaliana.</title>
        <authorList>
            <person name="Tabata S."/>
            <person name="Kaneko T."/>
            <person name="Nakamura Y."/>
            <person name="Kotani H."/>
            <person name="Kato T."/>
            <person name="Asamizu E."/>
            <person name="Miyajima N."/>
            <person name="Sasamoto S."/>
            <person name="Kimura T."/>
            <person name="Hosouchi T."/>
            <person name="Kawashima K."/>
            <person name="Kohara M."/>
            <person name="Matsumoto M."/>
            <person name="Matsuno A."/>
            <person name="Muraki A."/>
            <person name="Nakayama S."/>
            <person name="Nakazaki N."/>
            <person name="Naruo K."/>
            <person name="Okumura S."/>
            <person name="Shinpo S."/>
            <person name="Takeuchi C."/>
            <person name="Wada T."/>
            <person name="Watanabe A."/>
            <person name="Yamada M."/>
            <person name="Yasuda M."/>
            <person name="Sato S."/>
            <person name="de la Bastide M."/>
            <person name="Huang E."/>
            <person name="Spiegel L."/>
            <person name="Gnoj L."/>
            <person name="O'Shaughnessy A."/>
            <person name="Preston R."/>
            <person name="Habermann K."/>
            <person name="Murray J."/>
            <person name="Johnson D."/>
            <person name="Rohlfing T."/>
            <person name="Nelson J."/>
            <person name="Stoneking T."/>
            <person name="Pepin K."/>
            <person name="Spieth J."/>
            <person name="Sekhon M."/>
            <person name="Armstrong J."/>
            <person name="Becker M."/>
            <person name="Belter E."/>
            <person name="Cordum H."/>
            <person name="Cordes M."/>
            <person name="Courtney L."/>
            <person name="Courtney W."/>
            <person name="Dante M."/>
            <person name="Du H."/>
            <person name="Edwards J."/>
            <person name="Fryman J."/>
            <person name="Haakensen B."/>
            <person name="Lamar E."/>
            <person name="Latreille P."/>
            <person name="Leonard S."/>
            <person name="Meyer R."/>
            <person name="Mulvaney E."/>
            <person name="Ozersky P."/>
            <person name="Riley A."/>
            <person name="Strowmatt C."/>
            <person name="Wagner-McPherson C."/>
            <person name="Wollam A."/>
            <person name="Yoakum M."/>
            <person name="Bell M."/>
            <person name="Dedhia N."/>
            <person name="Parnell L."/>
            <person name="Shah R."/>
            <person name="Rodriguez M."/>
            <person name="Hoon See L."/>
            <person name="Vil D."/>
            <person name="Baker J."/>
            <person name="Kirchoff K."/>
            <person name="Toth K."/>
            <person name="King L."/>
            <person name="Bahret A."/>
            <person name="Miller B."/>
            <person name="Marra M.A."/>
            <person name="Martienssen R."/>
            <person name="McCombie W.R."/>
            <person name="Wilson R.K."/>
            <person name="Murphy G."/>
            <person name="Bancroft I."/>
            <person name="Volckaert G."/>
            <person name="Wambutt R."/>
            <person name="Duesterhoeft A."/>
            <person name="Stiekema W."/>
            <person name="Pohl T."/>
            <person name="Entian K.-D."/>
            <person name="Terryn N."/>
            <person name="Hartley N."/>
            <person name="Bent E."/>
            <person name="Johnson S."/>
            <person name="Langham S.-A."/>
            <person name="McCullagh B."/>
            <person name="Robben J."/>
            <person name="Grymonprez B."/>
            <person name="Zimmermann W."/>
            <person name="Ramsperger U."/>
            <person name="Wedler H."/>
            <person name="Balke K."/>
            <person name="Wedler E."/>
            <person name="Peters S."/>
            <person name="van Staveren M."/>
            <person name="Dirkse W."/>
            <person name="Mooijman P."/>
            <person name="Klein Lankhorst R."/>
            <person name="Weitzenegger T."/>
            <person name="Bothe G."/>
            <person name="Rose M."/>
            <person name="Hauf J."/>
            <person name="Berneiser S."/>
            <person name="Hempel S."/>
            <person name="Feldpausch M."/>
            <person name="Lamberth S."/>
            <person name="Villarroel R."/>
            <person name="Gielen J."/>
            <person name="Ardiles W."/>
            <person name="Bents O."/>
            <person name="Lemcke K."/>
            <person name="Kolesov G."/>
            <person name="Mayer K.F.X."/>
            <person name="Rudd S."/>
            <person name="Schoof H."/>
            <person name="Schueller C."/>
            <person name="Zaccaria P."/>
            <person name="Mewes H.-W."/>
            <person name="Bevan M."/>
            <person name="Fransz P.F."/>
        </authorList>
    </citation>
    <scope>NUCLEOTIDE SEQUENCE [LARGE SCALE GENOMIC DNA]</scope>
    <source>
        <strain>cv. Columbia</strain>
    </source>
</reference>
<reference key="2">
    <citation type="journal article" date="2017" name="Plant J.">
        <title>Araport11: a complete reannotation of the Arabidopsis thaliana reference genome.</title>
        <authorList>
            <person name="Cheng C.Y."/>
            <person name="Krishnakumar V."/>
            <person name="Chan A.P."/>
            <person name="Thibaud-Nissen F."/>
            <person name="Schobel S."/>
            <person name="Town C.D."/>
        </authorList>
    </citation>
    <scope>GENOME REANNOTATION</scope>
    <source>
        <strain>cv. Columbia</strain>
    </source>
</reference>
<reference key="3">
    <citation type="submission" date="2006-07" db="EMBL/GenBank/DDBJ databases">
        <title>Large-scale analysis of RIKEN Arabidopsis full-length (RAFL) cDNAs.</title>
        <authorList>
            <person name="Totoki Y."/>
            <person name="Seki M."/>
            <person name="Ishida J."/>
            <person name="Nakajima M."/>
            <person name="Enju A."/>
            <person name="Kamiya A."/>
            <person name="Narusaka M."/>
            <person name="Shin-i T."/>
            <person name="Nakagawa M."/>
            <person name="Sakamoto N."/>
            <person name="Oishi K."/>
            <person name="Kohara Y."/>
            <person name="Kobayashi M."/>
            <person name="Toyoda A."/>
            <person name="Sakaki Y."/>
            <person name="Sakurai T."/>
            <person name="Iida K."/>
            <person name="Akiyama K."/>
            <person name="Satou M."/>
            <person name="Toyoda T."/>
            <person name="Konagaya A."/>
            <person name="Carninci P."/>
            <person name="Kawai J."/>
            <person name="Hayashizaki Y."/>
            <person name="Shinozaki K."/>
        </authorList>
    </citation>
    <scope>NUCLEOTIDE SEQUENCE [LARGE SCALE MRNA] OF 1-348</scope>
    <source>
        <strain>cv. Columbia</strain>
    </source>
</reference>
<reference key="4">
    <citation type="journal article" date="2002" name="Genome Biol.">
        <title>Evaluation and classification of RING-finger domains encoded by the Arabidopsis genome.</title>
        <authorList>
            <person name="Kosarev P."/>
            <person name="Mayer K.F.X."/>
            <person name="Hardtke C.S."/>
        </authorList>
    </citation>
    <scope>GENE FAMILY ORGANIZATION</scope>
</reference>
<reference key="5">
    <citation type="journal article" date="2003" name="Plant Mol. Biol.">
        <title>Isolation, sequence analysis, and expression studies of florally expressed cDNAs in Arabidopsis.</title>
        <authorList>
            <person name="Hu W."/>
            <person name="Wang Y."/>
            <person name="Bowers C."/>
            <person name="Ma H."/>
        </authorList>
    </citation>
    <scope>TISSUE SPECIFICITY</scope>
</reference>
<reference key="6">
    <citation type="journal article" date="2006" name="J. Mol. Evol.">
        <title>The ATL gene family from Arabidopsis thaliana and Oryza sativa comprises a large number of putative ubiquitin ligases of the RING-H2 type.</title>
        <authorList>
            <person name="Serrano M."/>
            <person name="Parra S."/>
            <person name="Alcaraz L.D."/>
            <person name="Guzman P."/>
        </authorList>
    </citation>
    <scope>NOMENCLATURE</scope>
    <scope>GENE FAMILY ORGANIZATION</scope>
</reference>
<feature type="chain" id="PRO_0000055811" description="RING-H2 finger protein ATL52">
    <location>
        <begin position="1"/>
        <end position="362"/>
    </location>
</feature>
<feature type="transmembrane region" description="Helical" evidence="2">
    <location>
        <begin position="58"/>
        <end position="78"/>
    </location>
</feature>
<feature type="zinc finger region" description="RING-type; atypical" evidence="3">
    <location>
        <begin position="142"/>
        <end position="184"/>
    </location>
</feature>
<feature type="region of interest" description="Disordered" evidence="4">
    <location>
        <begin position="252"/>
        <end position="271"/>
    </location>
</feature>
<feature type="region of interest" description="Disordered" evidence="4">
    <location>
        <begin position="296"/>
        <end position="333"/>
    </location>
</feature>
<feature type="compositionally biased region" description="Basic and acidic residues" evidence="4">
    <location>
        <begin position="309"/>
        <end position="319"/>
    </location>
</feature>
<keyword id="KW-0472">Membrane</keyword>
<keyword id="KW-0479">Metal-binding</keyword>
<keyword id="KW-1185">Reference proteome</keyword>
<keyword id="KW-0808">Transferase</keyword>
<keyword id="KW-0812">Transmembrane</keyword>
<keyword id="KW-1133">Transmembrane helix</keyword>
<keyword id="KW-0833">Ubl conjugation pathway</keyword>
<keyword id="KW-0862">Zinc</keyword>
<keyword id="KW-0863">Zinc-finger</keyword>
<organism>
    <name type="scientific">Arabidopsis thaliana</name>
    <name type="common">Mouse-ear cress</name>
    <dbReference type="NCBI Taxonomy" id="3702"/>
    <lineage>
        <taxon>Eukaryota</taxon>
        <taxon>Viridiplantae</taxon>
        <taxon>Streptophyta</taxon>
        <taxon>Embryophyta</taxon>
        <taxon>Tracheophyta</taxon>
        <taxon>Spermatophyta</taxon>
        <taxon>Magnoliopsida</taxon>
        <taxon>eudicotyledons</taxon>
        <taxon>Gunneridae</taxon>
        <taxon>Pentapetalae</taxon>
        <taxon>rosids</taxon>
        <taxon>malvids</taxon>
        <taxon>Brassicales</taxon>
        <taxon>Brassicaceae</taxon>
        <taxon>Camelineae</taxon>
        <taxon>Arabidopsis</taxon>
    </lineage>
</organism>
<protein>
    <recommendedName>
        <fullName>RING-H2 finger protein ATL52</fullName>
        <ecNumber evidence="6">2.3.2.27</ecNumber>
    </recommendedName>
    <alternativeName>
        <fullName evidence="6">RING-type E3 ubiquitin transferase ATL52</fullName>
    </alternativeName>
</protein>
<gene>
    <name type="primary">ATL52</name>
    <name type="ordered locus">At5g17600</name>
    <name type="ORF">K10A8_80</name>
</gene>